<accession>P99139</accession>
<accession>Q99RZ9</accession>
<gene>
    <name type="primary">moeA</name>
    <name type="ordered locus">SA2068</name>
</gene>
<protein>
    <recommendedName>
        <fullName>Molybdopterin molybdenumtransferase</fullName>
        <shortName>MPT Mo-transferase</shortName>
        <ecNumber>2.10.1.1</ecNumber>
    </recommendedName>
</protein>
<comment type="function">
    <text evidence="1">Catalyzes the insertion of molybdate into adenylated molybdopterin with the concomitant release of AMP.</text>
</comment>
<comment type="catalytic activity">
    <reaction>
        <text>adenylyl-molybdopterin + molybdate = Mo-molybdopterin + AMP + H(+)</text>
        <dbReference type="Rhea" id="RHEA:35047"/>
        <dbReference type="ChEBI" id="CHEBI:15378"/>
        <dbReference type="ChEBI" id="CHEBI:36264"/>
        <dbReference type="ChEBI" id="CHEBI:62727"/>
        <dbReference type="ChEBI" id="CHEBI:71302"/>
        <dbReference type="ChEBI" id="CHEBI:456215"/>
        <dbReference type="EC" id="2.10.1.1"/>
    </reaction>
</comment>
<comment type="cofactor">
    <cofactor evidence="1">
        <name>Mg(2+)</name>
        <dbReference type="ChEBI" id="CHEBI:18420"/>
    </cofactor>
    <text evidence="1">Binds 1 Mg(2+) ion per subunit.</text>
</comment>
<comment type="pathway">
    <text>Cofactor biosynthesis; molybdopterin biosynthesis.</text>
</comment>
<comment type="similarity">
    <text evidence="2">Belongs to the MoeA family.</text>
</comment>
<reference key="1">
    <citation type="journal article" date="2001" name="Lancet">
        <title>Whole genome sequencing of meticillin-resistant Staphylococcus aureus.</title>
        <authorList>
            <person name="Kuroda M."/>
            <person name="Ohta T."/>
            <person name="Uchiyama I."/>
            <person name="Baba T."/>
            <person name="Yuzawa H."/>
            <person name="Kobayashi I."/>
            <person name="Cui L."/>
            <person name="Oguchi A."/>
            <person name="Aoki K."/>
            <person name="Nagai Y."/>
            <person name="Lian J.-Q."/>
            <person name="Ito T."/>
            <person name="Kanamori M."/>
            <person name="Matsumaru H."/>
            <person name="Maruyama A."/>
            <person name="Murakami H."/>
            <person name="Hosoyama A."/>
            <person name="Mizutani-Ui Y."/>
            <person name="Takahashi N.K."/>
            <person name="Sawano T."/>
            <person name="Inoue R."/>
            <person name="Kaito C."/>
            <person name="Sekimizu K."/>
            <person name="Hirakawa H."/>
            <person name="Kuhara S."/>
            <person name="Goto S."/>
            <person name="Yabuzaki J."/>
            <person name="Kanehisa M."/>
            <person name="Yamashita A."/>
            <person name="Oshima K."/>
            <person name="Furuya K."/>
            <person name="Yoshino C."/>
            <person name="Shiba T."/>
            <person name="Hattori M."/>
            <person name="Ogasawara N."/>
            <person name="Hayashi H."/>
            <person name="Hiramatsu K."/>
        </authorList>
    </citation>
    <scope>NUCLEOTIDE SEQUENCE [LARGE SCALE GENOMIC DNA]</scope>
    <source>
        <strain>N315</strain>
    </source>
</reference>
<reference key="2">
    <citation type="journal article" date="2005" name="J. Microbiol. Methods">
        <title>Correlation of proteomic and transcriptomic profiles of Staphylococcus aureus during the post-exponential phase of growth.</title>
        <authorList>
            <person name="Scherl A."/>
            <person name="Francois P."/>
            <person name="Bento M."/>
            <person name="Deshusses J.M."/>
            <person name="Charbonnier Y."/>
            <person name="Converset V."/>
            <person name="Huyghe A."/>
            <person name="Walter N."/>
            <person name="Hoogland C."/>
            <person name="Appel R.D."/>
            <person name="Sanchez J.-C."/>
            <person name="Zimmermann-Ivol C.G."/>
            <person name="Corthals G.L."/>
            <person name="Hochstrasser D.F."/>
            <person name="Schrenzel J."/>
        </authorList>
    </citation>
    <scope>IDENTIFICATION BY MASS SPECTROMETRY</scope>
    <source>
        <strain>N315</strain>
    </source>
</reference>
<reference key="3">
    <citation type="submission" date="2007-10" db="UniProtKB">
        <title>Shotgun proteomic analysis of total and membrane protein extracts of S. aureus strain N315.</title>
        <authorList>
            <person name="Vaezzadeh A.R."/>
            <person name="Deshusses J."/>
            <person name="Lescuyer P."/>
            <person name="Hochstrasser D.F."/>
        </authorList>
    </citation>
    <scope>IDENTIFICATION BY MASS SPECTROMETRY [LARGE SCALE ANALYSIS]</scope>
    <source>
        <strain>N315</strain>
    </source>
</reference>
<feature type="chain" id="PRO_0000170996" description="Molybdopterin molybdenumtransferase">
    <location>
        <begin position="1"/>
        <end position="419"/>
    </location>
</feature>
<sequence length="419" mass="44989">MVVEKRNPIPVKEAIQRIVNQQSSMPAITVALEKSLNHILAEDIVATYDIPRFDKSPYDGFAIRSVDSQGASGQNRIEFKVIDHIGAGSVSDKLVGDHEAVRIMTGAQIPNGADAVVMFEQTIELEDTFTIRKPFSKNENISLKGEETKTGDVVLKKGQVINPGAIAVLATYGYAEVKVIKQPSVAVIATGSELLDVNDVLEDGKIRNSNGPMIRALAEKLGLEVGIYKTQKDDLDSGIQVVKEAMEKHDIVITTGGVSVGDFDYLPEIYKAVKAEVLFNKVAMRPGSVTTVAFADGKYLFGLSGNPSACFTGFELFVKPAVKHMCGALEVFPQIIKATLMEDFTKANPFTRFIRAKATLTSAGATVVPSGFNKSGAVVAIAHANCMVMLPGGSRGFKAGHTVDIILTESDAAEEELLL</sequence>
<organism>
    <name type="scientific">Staphylococcus aureus (strain N315)</name>
    <dbReference type="NCBI Taxonomy" id="158879"/>
    <lineage>
        <taxon>Bacteria</taxon>
        <taxon>Bacillati</taxon>
        <taxon>Bacillota</taxon>
        <taxon>Bacilli</taxon>
        <taxon>Bacillales</taxon>
        <taxon>Staphylococcaceae</taxon>
        <taxon>Staphylococcus</taxon>
    </lineage>
</organism>
<keyword id="KW-0460">Magnesium</keyword>
<keyword id="KW-0479">Metal-binding</keyword>
<keyword id="KW-0500">Molybdenum</keyword>
<keyword id="KW-0501">Molybdenum cofactor biosynthesis</keyword>
<keyword id="KW-0808">Transferase</keyword>
<dbReference type="EC" id="2.10.1.1"/>
<dbReference type="EMBL" id="BA000018">
    <property type="protein sequence ID" value="BAB43365.1"/>
    <property type="molecule type" value="Genomic_DNA"/>
</dbReference>
<dbReference type="PIR" id="D90025">
    <property type="entry name" value="D90025"/>
</dbReference>
<dbReference type="SMR" id="P99139"/>
<dbReference type="EnsemblBacteria" id="BAB43365">
    <property type="protein sequence ID" value="BAB43365"/>
    <property type="gene ID" value="BAB43365"/>
</dbReference>
<dbReference type="KEGG" id="sau:SA2068"/>
<dbReference type="HOGENOM" id="CLU_010186_7_1_9"/>
<dbReference type="UniPathway" id="UPA00344"/>
<dbReference type="GO" id="GO:0005829">
    <property type="term" value="C:cytosol"/>
    <property type="evidence" value="ECO:0007669"/>
    <property type="project" value="TreeGrafter"/>
</dbReference>
<dbReference type="GO" id="GO:0046872">
    <property type="term" value="F:metal ion binding"/>
    <property type="evidence" value="ECO:0007669"/>
    <property type="project" value="UniProtKB-KW"/>
</dbReference>
<dbReference type="GO" id="GO:0061599">
    <property type="term" value="F:molybdopterin molybdotransferase activity"/>
    <property type="evidence" value="ECO:0007669"/>
    <property type="project" value="UniProtKB-EC"/>
</dbReference>
<dbReference type="GO" id="GO:0006777">
    <property type="term" value="P:Mo-molybdopterin cofactor biosynthetic process"/>
    <property type="evidence" value="ECO:0007669"/>
    <property type="project" value="UniProtKB-KW"/>
</dbReference>
<dbReference type="CDD" id="cd00887">
    <property type="entry name" value="MoeA"/>
    <property type="match status" value="1"/>
</dbReference>
<dbReference type="FunFam" id="2.170.190.11:FF:000001">
    <property type="entry name" value="Molybdopterin molybdenumtransferase"/>
    <property type="match status" value="1"/>
</dbReference>
<dbReference type="FunFam" id="2.40.340.10:FF:000002">
    <property type="entry name" value="Molybdopterin molybdenumtransferase"/>
    <property type="match status" value="1"/>
</dbReference>
<dbReference type="FunFam" id="3.40.980.10:FF:000004">
    <property type="entry name" value="Molybdopterin molybdenumtransferase"/>
    <property type="match status" value="1"/>
</dbReference>
<dbReference type="Gene3D" id="3.40.980.10">
    <property type="entry name" value="MoaB/Mog-like domain"/>
    <property type="match status" value="1"/>
</dbReference>
<dbReference type="Gene3D" id="2.40.340.10">
    <property type="entry name" value="MoeA, C-terminal, domain IV"/>
    <property type="match status" value="1"/>
</dbReference>
<dbReference type="Gene3D" id="3.90.105.10">
    <property type="entry name" value="Molybdopterin biosynthesis moea protein, domain 2"/>
    <property type="match status" value="1"/>
</dbReference>
<dbReference type="Gene3D" id="2.170.190.11">
    <property type="entry name" value="Molybdopterin biosynthesis moea protein, domain 3"/>
    <property type="match status" value="1"/>
</dbReference>
<dbReference type="InterPro" id="IPR036425">
    <property type="entry name" value="MoaB/Mog-like_dom_sf"/>
</dbReference>
<dbReference type="InterPro" id="IPR001453">
    <property type="entry name" value="MoaB/Mog_dom"/>
</dbReference>
<dbReference type="InterPro" id="IPR038987">
    <property type="entry name" value="MoeA-like"/>
</dbReference>
<dbReference type="InterPro" id="IPR005111">
    <property type="entry name" value="MoeA_C_domain_IV"/>
</dbReference>
<dbReference type="InterPro" id="IPR036688">
    <property type="entry name" value="MoeA_C_domain_IV_sf"/>
</dbReference>
<dbReference type="InterPro" id="IPR005110">
    <property type="entry name" value="MoeA_linker/N"/>
</dbReference>
<dbReference type="InterPro" id="IPR036135">
    <property type="entry name" value="MoeA_linker/N_sf"/>
</dbReference>
<dbReference type="NCBIfam" id="NF045515">
    <property type="entry name" value="Glp_gephyrin"/>
    <property type="match status" value="1"/>
</dbReference>
<dbReference type="NCBIfam" id="TIGR00177">
    <property type="entry name" value="molyb_syn"/>
    <property type="match status" value="1"/>
</dbReference>
<dbReference type="PANTHER" id="PTHR10192:SF5">
    <property type="entry name" value="GEPHYRIN"/>
    <property type="match status" value="1"/>
</dbReference>
<dbReference type="PANTHER" id="PTHR10192">
    <property type="entry name" value="MOLYBDOPTERIN BIOSYNTHESIS PROTEIN"/>
    <property type="match status" value="1"/>
</dbReference>
<dbReference type="Pfam" id="PF00994">
    <property type="entry name" value="MoCF_biosynth"/>
    <property type="match status" value="1"/>
</dbReference>
<dbReference type="Pfam" id="PF03454">
    <property type="entry name" value="MoeA_C"/>
    <property type="match status" value="1"/>
</dbReference>
<dbReference type="Pfam" id="PF03453">
    <property type="entry name" value="MoeA_N"/>
    <property type="match status" value="1"/>
</dbReference>
<dbReference type="SMART" id="SM00852">
    <property type="entry name" value="MoCF_biosynth"/>
    <property type="match status" value="1"/>
</dbReference>
<dbReference type="SUPFAM" id="SSF63867">
    <property type="entry name" value="MoeA C-terminal domain-like"/>
    <property type="match status" value="1"/>
</dbReference>
<dbReference type="SUPFAM" id="SSF63882">
    <property type="entry name" value="MoeA N-terminal region -like"/>
    <property type="match status" value="1"/>
</dbReference>
<dbReference type="SUPFAM" id="SSF53218">
    <property type="entry name" value="Molybdenum cofactor biosynthesis proteins"/>
    <property type="match status" value="1"/>
</dbReference>
<evidence type="ECO:0000250" key="1"/>
<evidence type="ECO:0000305" key="2"/>
<name>MOEA_STAAN</name>
<proteinExistence type="evidence at protein level"/>